<sequence>MSLVAYASSDESEPDEAEPEPEEEEAVAPTSGPALGGLFASLPAPKGPALLPPPPQMLAPAFPPPLLLPPPTGDPRLQPPPPLPFGLGGFPPPPGVSPAEAAGVGEGLGLGLPSPRGPGLNLPPPIGGAGPPLGLPKPKKRKEPVKIAAPELHKGDSDSEEDEPTKKKTILQGSSEGTGLSALLPQPKNLTVKETNRLLLPHAFSRKPSDGSPDTKPSRLASKTKTSSLAPVVGTTTTTPSPSAIKAAAKSAALQVTKQITQEEDDSDEEVAPENFFSLPEKAEPPGVEPYPYPIPTVPEELPPGTEPEPAFQDDAANAPLEFKMAAGSSGAPWMPKPGDDYSYNQFSTYGDANAAGAYYQDYYSGGYYPAQDPALVPPQEIAPDASFIDDEAFKRLQGKRNRGREEINFVEIKGDDQLSGAQQWMTKSLTEEKTMKSFSKKKGEQPTGQQRRKHQITYLIHQAKERELELKNTWSENKLSRRQTQAKYGF</sequence>
<comment type="function">
    <text evidence="2">May regulate cell cycle progression through interaction with MAD2L2.</text>
</comment>
<comment type="subunit">
    <text evidence="2">Interacts with MAD2L2; the interaction is direct.</text>
</comment>
<comment type="interaction">
    <interactant intactId="EBI-4397741">
        <id>Q92733</id>
    </interactant>
    <interactant intactId="EBI-748420">
        <id>Q9NSC5</id>
        <label>HOMER3</label>
    </interactant>
    <organismsDiffer>false</organismsDiffer>
    <experiments>3</experiments>
</comment>
<comment type="subcellular location">
    <subcellularLocation>
        <location evidence="2">Nucleus</location>
    </subcellularLocation>
</comment>
<comment type="tissue specificity">
    <text>Ubiquitous in fetal and adult tissues.</text>
</comment>
<comment type="disease">
    <text evidence="4 5">A chromosomal aberration involving PRCC is found in patients with papillary renal cell carcinoma. Translocation t(X;1)(p11.2;q21.2) with TFE3.</text>
</comment>
<comment type="online information" name="Atlas of Genetics and Cytogenetics in Oncology and Haematology">
    <link uri="https://atlasgeneticsoncology.org/gene/69/PRCC"/>
</comment>
<proteinExistence type="evidence at protein level"/>
<protein>
    <recommendedName>
        <fullName>Proline-rich protein PRCC</fullName>
    </recommendedName>
    <alternativeName>
        <fullName>Papillary renal cell carcinoma translocation-associated gene protein</fullName>
    </alternativeName>
</protein>
<organism>
    <name type="scientific">Homo sapiens</name>
    <name type="common">Human</name>
    <dbReference type="NCBI Taxonomy" id="9606"/>
    <lineage>
        <taxon>Eukaryota</taxon>
        <taxon>Metazoa</taxon>
        <taxon>Chordata</taxon>
        <taxon>Craniata</taxon>
        <taxon>Vertebrata</taxon>
        <taxon>Euteleostomi</taxon>
        <taxon>Mammalia</taxon>
        <taxon>Eutheria</taxon>
        <taxon>Euarchontoglires</taxon>
        <taxon>Primates</taxon>
        <taxon>Haplorrhini</taxon>
        <taxon>Catarrhini</taxon>
        <taxon>Hominidae</taxon>
        <taxon>Homo</taxon>
    </lineage>
</organism>
<gene>
    <name type="primary">PRCC</name>
    <name type="synonym">TPRC</name>
</gene>
<name>PRCC_HUMAN</name>
<accession>Q92733</accession>
<accession>A8K1F7</accession>
<accession>O00665</accession>
<accession>O00724</accession>
<accession>Q5SZ06</accession>
<evidence type="ECO:0000256" key="1">
    <source>
        <dbReference type="SAM" id="MobiDB-lite"/>
    </source>
</evidence>
<evidence type="ECO:0000269" key="2">
    <source>
    </source>
</evidence>
<evidence type="ECO:0000269" key="3">
    <source>
    </source>
</evidence>
<evidence type="ECO:0000269" key="4">
    <source>
    </source>
</evidence>
<evidence type="ECO:0000269" key="5">
    <source>
    </source>
</evidence>
<evidence type="ECO:0007744" key="6">
    <source>
    </source>
</evidence>
<evidence type="ECO:0007744" key="7">
    <source>
    </source>
</evidence>
<evidence type="ECO:0007744" key="8">
    <source>
    </source>
</evidence>
<evidence type="ECO:0007744" key="9">
    <source>
    </source>
</evidence>
<evidence type="ECO:0007744" key="10">
    <source>
    </source>
</evidence>
<evidence type="ECO:0007744" key="11">
    <source>
    </source>
</evidence>
<reference key="1">
    <citation type="journal article" date="1996" name="Hum. Mol. Genet.">
        <title>The t(X;1)(p11.2;q21.2) translocation in papillary renal cell carcinoma fuses a novel gene PRCC to the TFE3 transcription factor gene.</title>
        <authorList>
            <person name="Sidhar S.K."/>
            <person name="Clark J."/>
            <person name="Gill S."/>
            <person name="Hamoudi R."/>
            <person name="Crew A.J."/>
            <person name="Gwilliam R."/>
            <person name="Ross M."/>
            <person name="Linehan W.M."/>
            <person name="Birdsall S."/>
            <person name="Shipley J."/>
            <person name="Cooper C.S."/>
        </authorList>
    </citation>
    <scope>NUCLEOTIDE SEQUENCE [MRNA]</scope>
    <scope>CHROMOSOMAL TRANSLOCATION WITH TFE3</scope>
    <source>
        <tissue>Monocyte</tissue>
    </source>
</reference>
<reference key="2">
    <citation type="journal article" date="1996" name="Proc. Natl. Acad. Sci. U.S.A.">
        <title>Fusion of the transcription factor TFE3 gene to a novel gene, PRCC, in t(X;1)(p11;q21)-positive papillary renal cell carcinomas.</title>
        <authorList>
            <person name="Weterman M.A.J."/>
            <person name="Wilbrink M."/>
            <person name="Geurts van Kessel A."/>
        </authorList>
    </citation>
    <scope>NUCLEOTIDE SEQUENCE [GENOMIC DNA]</scope>
    <scope>CHROMOSOMAL TRANSLOCATION WITH TFE3</scope>
</reference>
<reference key="3">
    <citation type="journal article" date="2004" name="Nat. Genet.">
        <title>Complete sequencing and characterization of 21,243 full-length human cDNAs.</title>
        <authorList>
            <person name="Ota T."/>
            <person name="Suzuki Y."/>
            <person name="Nishikawa T."/>
            <person name="Otsuki T."/>
            <person name="Sugiyama T."/>
            <person name="Irie R."/>
            <person name="Wakamatsu A."/>
            <person name="Hayashi K."/>
            <person name="Sato H."/>
            <person name="Nagai K."/>
            <person name="Kimura K."/>
            <person name="Makita H."/>
            <person name="Sekine M."/>
            <person name="Obayashi M."/>
            <person name="Nishi T."/>
            <person name="Shibahara T."/>
            <person name="Tanaka T."/>
            <person name="Ishii S."/>
            <person name="Yamamoto J."/>
            <person name="Saito K."/>
            <person name="Kawai Y."/>
            <person name="Isono Y."/>
            <person name="Nakamura Y."/>
            <person name="Nagahari K."/>
            <person name="Murakami K."/>
            <person name="Yasuda T."/>
            <person name="Iwayanagi T."/>
            <person name="Wagatsuma M."/>
            <person name="Shiratori A."/>
            <person name="Sudo H."/>
            <person name="Hosoiri T."/>
            <person name="Kaku Y."/>
            <person name="Kodaira H."/>
            <person name="Kondo H."/>
            <person name="Sugawara M."/>
            <person name="Takahashi M."/>
            <person name="Kanda K."/>
            <person name="Yokoi T."/>
            <person name="Furuya T."/>
            <person name="Kikkawa E."/>
            <person name="Omura Y."/>
            <person name="Abe K."/>
            <person name="Kamihara K."/>
            <person name="Katsuta N."/>
            <person name="Sato K."/>
            <person name="Tanikawa M."/>
            <person name="Yamazaki M."/>
            <person name="Ninomiya K."/>
            <person name="Ishibashi T."/>
            <person name="Yamashita H."/>
            <person name="Murakawa K."/>
            <person name="Fujimori K."/>
            <person name="Tanai H."/>
            <person name="Kimata M."/>
            <person name="Watanabe M."/>
            <person name="Hiraoka S."/>
            <person name="Chiba Y."/>
            <person name="Ishida S."/>
            <person name="Ono Y."/>
            <person name="Takiguchi S."/>
            <person name="Watanabe S."/>
            <person name="Yosida M."/>
            <person name="Hotuta T."/>
            <person name="Kusano J."/>
            <person name="Kanehori K."/>
            <person name="Takahashi-Fujii A."/>
            <person name="Hara H."/>
            <person name="Tanase T.-O."/>
            <person name="Nomura Y."/>
            <person name="Togiya S."/>
            <person name="Komai F."/>
            <person name="Hara R."/>
            <person name="Takeuchi K."/>
            <person name="Arita M."/>
            <person name="Imose N."/>
            <person name="Musashino K."/>
            <person name="Yuuki H."/>
            <person name="Oshima A."/>
            <person name="Sasaki N."/>
            <person name="Aotsuka S."/>
            <person name="Yoshikawa Y."/>
            <person name="Matsunawa H."/>
            <person name="Ichihara T."/>
            <person name="Shiohata N."/>
            <person name="Sano S."/>
            <person name="Moriya S."/>
            <person name="Momiyama H."/>
            <person name="Satoh N."/>
            <person name="Takami S."/>
            <person name="Terashima Y."/>
            <person name="Suzuki O."/>
            <person name="Nakagawa S."/>
            <person name="Senoh A."/>
            <person name="Mizoguchi H."/>
            <person name="Goto Y."/>
            <person name="Shimizu F."/>
            <person name="Wakebe H."/>
            <person name="Hishigaki H."/>
            <person name="Watanabe T."/>
            <person name="Sugiyama A."/>
            <person name="Takemoto M."/>
            <person name="Kawakami B."/>
            <person name="Yamazaki M."/>
            <person name="Watanabe K."/>
            <person name="Kumagai A."/>
            <person name="Itakura S."/>
            <person name="Fukuzumi Y."/>
            <person name="Fujimori Y."/>
            <person name="Komiyama M."/>
            <person name="Tashiro H."/>
            <person name="Tanigami A."/>
            <person name="Fujiwara T."/>
            <person name="Ono T."/>
            <person name="Yamada K."/>
            <person name="Fujii Y."/>
            <person name="Ozaki K."/>
            <person name="Hirao M."/>
            <person name="Ohmori Y."/>
            <person name="Kawabata A."/>
            <person name="Hikiji T."/>
            <person name="Kobatake N."/>
            <person name="Inagaki H."/>
            <person name="Ikema Y."/>
            <person name="Okamoto S."/>
            <person name="Okitani R."/>
            <person name="Kawakami T."/>
            <person name="Noguchi S."/>
            <person name="Itoh T."/>
            <person name="Shigeta K."/>
            <person name="Senba T."/>
            <person name="Matsumura K."/>
            <person name="Nakajima Y."/>
            <person name="Mizuno T."/>
            <person name="Morinaga M."/>
            <person name="Sasaki M."/>
            <person name="Togashi T."/>
            <person name="Oyama M."/>
            <person name="Hata H."/>
            <person name="Watanabe M."/>
            <person name="Komatsu T."/>
            <person name="Mizushima-Sugano J."/>
            <person name="Satoh T."/>
            <person name="Shirai Y."/>
            <person name="Takahashi Y."/>
            <person name="Nakagawa K."/>
            <person name="Okumura K."/>
            <person name="Nagase T."/>
            <person name="Nomura N."/>
            <person name="Kikuchi H."/>
            <person name="Masuho Y."/>
            <person name="Yamashita R."/>
            <person name="Nakai K."/>
            <person name="Yada T."/>
            <person name="Nakamura Y."/>
            <person name="Ohara O."/>
            <person name="Isogai T."/>
            <person name="Sugano S."/>
        </authorList>
    </citation>
    <scope>NUCLEOTIDE SEQUENCE [LARGE SCALE MRNA]</scope>
    <scope>VARIANT SER-136</scope>
    <source>
        <tissue>Caudate nucleus</tissue>
    </source>
</reference>
<reference key="4">
    <citation type="journal article" date="2006" name="Nature">
        <title>The DNA sequence and biological annotation of human chromosome 1.</title>
        <authorList>
            <person name="Gregory S.G."/>
            <person name="Barlow K.F."/>
            <person name="McLay K.E."/>
            <person name="Kaul R."/>
            <person name="Swarbreck D."/>
            <person name="Dunham A."/>
            <person name="Scott C.E."/>
            <person name="Howe K.L."/>
            <person name="Woodfine K."/>
            <person name="Spencer C.C.A."/>
            <person name="Jones M.C."/>
            <person name="Gillson C."/>
            <person name="Searle S."/>
            <person name="Zhou Y."/>
            <person name="Kokocinski F."/>
            <person name="McDonald L."/>
            <person name="Evans R."/>
            <person name="Phillips K."/>
            <person name="Atkinson A."/>
            <person name="Cooper R."/>
            <person name="Jones C."/>
            <person name="Hall R.E."/>
            <person name="Andrews T.D."/>
            <person name="Lloyd C."/>
            <person name="Ainscough R."/>
            <person name="Almeida J.P."/>
            <person name="Ambrose K.D."/>
            <person name="Anderson F."/>
            <person name="Andrew R.W."/>
            <person name="Ashwell R.I.S."/>
            <person name="Aubin K."/>
            <person name="Babbage A.K."/>
            <person name="Bagguley C.L."/>
            <person name="Bailey J."/>
            <person name="Beasley H."/>
            <person name="Bethel G."/>
            <person name="Bird C.P."/>
            <person name="Bray-Allen S."/>
            <person name="Brown J.Y."/>
            <person name="Brown A.J."/>
            <person name="Buckley D."/>
            <person name="Burton J."/>
            <person name="Bye J."/>
            <person name="Carder C."/>
            <person name="Chapman J.C."/>
            <person name="Clark S.Y."/>
            <person name="Clarke G."/>
            <person name="Clee C."/>
            <person name="Cobley V."/>
            <person name="Collier R.E."/>
            <person name="Corby N."/>
            <person name="Coville G.J."/>
            <person name="Davies J."/>
            <person name="Deadman R."/>
            <person name="Dunn M."/>
            <person name="Earthrowl M."/>
            <person name="Ellington A.G."/>
            <person name="Errington H."/>
            <person name="Frankish A."/>
            <person name="Frankland J."/>
            <person name="French L."/>
            <person name="Garner P."/>
            <person name="Garnett J."/>
            <person name="Gay L."/>
            <person name="Ghori M.R.J."/>
            <person name="Gibson R."/>
            <person name="Gilby L.M."/>
            <person name="Gillett W."/>
            <person name="Glithero R.J."/>
            <person name="Grafham D.V."/>
            <person name="Griffiths C."/>
            <person name="Griffiths-Jones S."/>
            <person name="Grocock R."/>
            <person name="Hammond S."/>
            <person name="Harrison E.S.I."/>
            <person name="Hart E."/>
            <person name="Haugen E."/>
            <person name="Heath P.D."/>
            <person name="Holmes S."/>
            <person name="Holt K."/>
            <person name="Howden P.J."/>
            <person name="Hunt A.R."/>
            <person name="Hunt S.E."/>
            <person name="Hunter G."/>
            <person name="Isherwood J."/>
            <person name="James R."/>
            <person name="Johnson C."/>
            <person name="Johnson D."/>
            <person name="Joy A."/>
            <person name="Kay M."/>
            <person name="Kershaw J.K."/>
            <person name="Kibukawa M."/>
            <person name="Kimberley A.M."/>
            <person name="King A."/>
            <person name="Knights A.J."/>
            <person name="Lad H."/>
            <person name="Laird G."/>
            <person name="Lawlor S."/>
            <person name="Leongamornlert D.A."/>
            <person name="Lloyd D.M."/>
            <person name="Loveland J."/>
            <person name="Lovell J."/>
            <person name="Lush M.J."/>
            <person name="Lyne R."/>
            <person name="Martin S."/>
            <person name="Mashreghi-Mohammadi M."/>
            <person name="Matthews L."/>
            <person name="Matthews N.S.W."/>
            <person name="McLaren S."/>
            <person name="Milne S."/>
            <person name="Mistry S."/>
            <person name="Moore M.J.F."/>
            <person name="Nickerson T."/>
            <person name="O'Dell C.N."/>
            <person name="Oliver K."/>
            <person name="Palmeiri A."/>
            <person name="Palmer S.A."/>
            <person name="Parker A."/>
            <person name="Patel D."/>
            <person name="Pearce A.V."/>
            <person name="Peck A.I."/>
            <person name="Pelan S."/>
            <person name="Phelps K."/>
            <person name="Phillimore B.J."/>
            <person name="Plumb R."/>
            <person name="Rajan J."/>
            <person name="Raymond C."/>
            <person name="Rouse G."/>
            <person name="Saenphimmachak C."/>
            <person name="Sehra H.K."/>
            <person name="Sheridan E."/>
            <person name="Shownkeen R."/>
            <person name="Sims S."/>
            <person name="Skuce C.D."/>
            <person name="Smith M."/>
            <person name="Steward C."/>
            <person name="Subramanian S."/>
            <person name="Sycamore N."/>
            <person name="Tracey A."/>
            <person name="Tromans A."/>
            <person name="Van Helmond Z."/>
            <person name="Wall M."/>
            <person name="Wallis J.M."/>
            <person name="White S."/>
            <person name="Whitehead S.L."/>
            <person name="Wilkinson J.E."/>
            <person name="Willey D.L."/>
            <person name="Williams H."/>
            <person name="Wilming L."/>
            <person name="Wray P.W."/>
            <person name="Wu Z."/>
            <person name="Coulson A."/>
            <person name="Vaudin M."/>
            <person name="Sulston J.E."/>
            <person name="Durbin R.M."/>
            <person name="Hubbard T."/>
            <person name="Wooster R."/>
            <person name="Dunham I."/>
            <person name="Carter N.P."/>
            <person name="McVean G."/>
            <person name="Ross M.T."/>
            <person name="Harrow J."/>
            <person name="Olson M.V."/>
            <person name="Beck S."/>
            <person name="Rogers J."/>
            <person name="Bentley D.R."/>
        </authorList>
    </citation>
    <scope>NUCLEOTIDE SEQUENCE [LARGE SCALE GENOMIC DNA]</scope>
</reference>
<reference key="5">
    <citation type="submission" date="2005-09" db="EMBL/GenBank/DDBJ databases">
        <authorList>
            <person name="Mural R.J."/>
            <person name="Istrail S."/>
            <person name="Sutton G.G."/>
            <person name="Florea L."/>
            <person name="Halpern A.L."/>
            <person name="Mobarry C.M."/>
            <person name="Lippert R."/>
            <person name="Walenz B."/>
            <person name="Shatkay H."/>
            <person name="Dew I."/>
            <person name="Miller J.R."/>
            <person name="Flanigan M.J."/>
            <person name="Edwards N.J."/>
            <person name="Bolanos R."/>
            <person name="Fasulo D."/>
            <person name="Halldorsson B.V."/>
            <person name="Hannenhalli S."/>
            <person name="Turner R."/>
            <person name="Yooseph S."/>
            <person name="Lu F."/>
            <person name="Nusskern D.R."/>
            <person name="Shue B.C."/>
            <person name="Zheng X.H."/>
            <person name="Zhong F."/>
            <person name="Delcher A.L."/>
            <person name="Huson D.H."/>
            <person name="Kravitz S.A."/>
            <person name="Mouchard L."/>
            <person name="Reinert K."/>
            <person name="Remington K.A."/>
            <person name="Clark A.G."/>
            <person name="Waterman M.S."/>
            <person name="Eichler E.E."/>
            <person name="Adams M.D."/>
            <person name="Hunkapiller M.W."/>
            <person name="Myers E.W."/>
            <person name="Venter J.C."/>
        </authorList>
    </citation>
    <scope>NUCLEOTIDE SEQUENCE [LARGE SCALE GENOMIC DNA]</scope>
</reference>
<reference key="6">
    <citation type="journal article" date="2004" name="Genome Res.">
        <title>The status, quality, and expansion of the NIH full-length cDNA project: the Mammalian Gene Collection (MGC).</title>
        <authorList>
            <consortium name="The MGC Project Team"/>
        </authorList>
    </citation>
    <scope>NUCLEOTIDE SEQUENCE [LARGE SCALE MRNA]</scope>
    <source>
        <tissue>Lung</tissue>
    </source>
</reference>
<reference key="7">
    <citation type="journal article" date="2001" name="Proc. Natl. Acad. Sci. U.S.A.">
        <title>Impairment of MAD2B-PRCC interaction in mitotic checkpoint defective t(X;1)-positive renal cell carcinomas.</title>
        <authorList>
            <person name="Weterman M.A."/>
            <person name="van Groningen J.J."/>
            <person name="Tertoolen L."/>
            <person name="van Kessel A.G."/>
        </authorList>
    </citation>
    <scope>FUNCTION</scope>
    <scope>INTERACTION WITH MAD2L2</scope>
    <scope>SUBCELLULAR LOCATION</scope>
</reference>
<reference key="8">
    <citation type="journal article" date="2006" name="Cell">
        <title>Global, in vivo, and site-specific phosphorylation dynamics in signaling networks.</title>
        <authorList>
            <person name="Olsen J.V."/>
            <person name="Blagoev B."/>
            <person name="Gnad F."/>
            <person name="Macek B."/>
            <person name="Kumar C."/>
            <person name="Mortensen P."/>
            <person name="Mann M."/>
        </authorList>
    </citation>
    <scope>PHOSPHORYLATION [LARGE SCALE ANALYSIS] AT SER-218</scope>
    <scope>IDENTIFICATION BY MASS SPECTROMETRY [LARGE SCALE ANALYSIS]</scope>
    <source>
        <tissue>Cervix carcinoma</tissue>
    </source>
</reference>
<reference key="9">
    <citation type="journal article" date="2008" name="Proc. Natl. Acad. Sci. U.S.A.">
        <title>A quantitative atlas of mitotic phosphorylation.</title>
        <authorList>
            <person name="Dephoure N."/>
            <person name="Zhou C."/>
            <person name="Villen J."/>
            <person name="Beausoleil S.A."/>
            <person name="Bakalarski C.E."/>
            <person name="Elledge S.J."/>
            <person name="Gygi S.P."/>
        </authorList>
    </citation>
    <scope>PHOSPHORYLATION [LARGE SCALE ANALYSIS] AT SER-157; SER-159 AND SER-267</scope>
    <scope>IDENTIFICATION BY MASS SPECTROMETRY [LARGE SCALE ANALYSIS]</scope>
    <source>
        <tissue>Cervix carcinoma</tissue>
    </source>
</reference>
<reference key="10">
    <citation type="journal article" date="2009" name="Anal. Chem.">
        <title>Lys-N and trypsin cover complementary parts of the phosphoproteome in a refined SCX-based approach.</title>
        <authorList>
            <person name="Gauci S."/>
            <person name="Helbig A.O."/>
            <person name="Slijper M."/>
            <person name="Krijgsveld J."/>
            <person name="Heck A.J."/>
            <person name="Mohammed S."/>
        </authorList>
    </citation>
    <scope>IDENTIFICATION BY MASS SPECTROMETRY [LARGE SCALE ANALYSIS]</scope>
</reference>
<reference key="11">
    <citation type="journal article" date="2009" name="Sci. Signal.">
        <title>Quantitative phosphoproteomic analysis of T cell receptor signaling reveals system-wide modulation of protein-protein interactions.</title>
        <authorList>
            <person name="Mayya V."/>
            <person name="Lundgren D.H."/>
            <person name="Hwang S.-I."/>
            <person name="Rezaul K."/>
            <person name="Wu L."/>
            <person name="Eng J.K."/>
            <person name="Rodionov V."/>
            <person name="Han D.K."/>
        </authorList>
    </citation>
    <scope>IDENTIFICATION BY MASS SPECTROMETRY [LARGE SCALE ANALYSIS]</scope>
    <source>
        <tissue>Leukemic T-cell</tissue>
    </source>
</reference>
<reference key="12">
    <citation type="journal article" date="2010" name="Sci. Signal.">
        <title>Quantitative phosphoproteomics reveals widespread full phosphorylation site occupancy during mitosis.</title>
        <authorList>
            <person name="Olsen J.V."/>
            <person name="Vermeulen M."/>
            <person name="Santamaria A."/>
            <person name="Kumar C."/>
            <person name="Miller M.L."/>
            <person name="Jensen L.J."/>
            <person name="Gnad F."/>
            <person name="Cox J."/>
            <person name="Jensen T.S."/>
            <person name="Nigg E.A."/>
            <person name="Brunak S."/>
            <person name="Mann M."/>
        </authorList>
    </citation>
    <scope>PHOSPHORYLATION [LARGE SCALE ANALYSIS] AT SER-97; SER-114; SER-157; SER-159; SER-212; THR-239 AND SER-241</scope>
    <scope>IDENTIFICATION BY MASS SPECTROMETRY [LARGE SCALE ANALYSIS]</scope>
    <source>
        <tissue>Cervix carcinoma</tissue>
    </source>
</reference>
<reference key="13">
    <citation type="journal article" date="2011" name="BMC Syst. Biol.">
        <title>Initial characterization of the human central proteome.</title>
        <authorList>
            <person name="Burkard T.R."/>
            <person name="Planyavsky M."/>
            <person name="Kaupe I."/>
            <person name="Breitwieser F.P."/>
            <person name="Buerckstuemmer T."/>
            <person name="Bennett K.L."/>
            <person name="Superti-Furga G."/>
            <person name="Colinge J."/>
        </authorList>
    </citation>
    <scope>IDENTIFICATION BY MASS SPECTROMETRY [LARGE SCALE ANALYSIS]</scope>
</reference>
<reference key="14">
    <citation type="journal article" date="2011" name="Sci. Signal.">
        <title>System-wide temporal characterization of the proteome and phosphoproteome of human embryonic stem cell differentiation.</title>
        <authorList>
            <person name="Rigbolt K.T."/>
            <person name="Prokhorova T.A."/>
            <person name="Akimov V."/>
            <person name="Henningsen J."/>
            <person name="Johansen P.T."/>
            <person name="Kratchmarova I."/>
            <person name="Kassem M."/>
            <person name="Mann M."/>
            <person name="Olsen J.V."/>
            <person name="Blagoev B."/>
        </authorList>
    </citation>
    <scope>PHOSPHORYLATION [LARGE SCALE ANALYSIS] AT SER-157 AND SER-159</scope>
    <scope>IDENTIFICATION BY MASS SPECTROMETRY [LARGE SCALE ANALYSIS]</scope>
</reference>
<reference key="15">
    <citation type="journal article" date="2013" name="J. Proteome Res.">
        <title>Toward a comprehensive characterization of a human cancer cell phosphoproteome.</title>
        <authorList>
            <person name="Zhou H."/>
            <person name="Di Palma S."/>
            <person name="Preisinger C."/>
            <person name="Peng M."/>
            <person name="Polat A.N."/>
            <person name="Heck A.J."/>
            <person name="Mohammed S."/>
        </authorList>
    </citation>
    <scope>PHOSPHORYLATION [LARGE SCALE ANALYSIS] AT SER-157; SER-159 AND SER-241</scope>
    <scope>IDENTIFICATION BY MASS SPECTROMETRY [LARGE SCALE ANALYSIS]</scope>
    <source>
        <tissue>Cervix carcinoma</tissue>
        <tissue>Erythroleukemia</tissue>
    </source>
</reference>
<reference key="16">
    <citation type="journal article" date="2014" name="J. Proteomics">
        <title>An enzyme assisted RP-RPLC approach for in-depth analysis of human liver phosphoproteome.</title>
        <authorList>
            <person name="Bian Y."/>
            <person name="Song C."/>
            <person name="Cheng K."/>
            <person name="Dong M."/>
            <person name="Wang F."/>
            <person name="Huang J."/>
            <person name="Sun D."/>
            <person name="Wang L."/>
            <person name="Ye M."/>
            <person name="Zou H."/>
        </authorList>
    </citation>
    <scope>PHOSPHORYLATION [LARGE SCALE ANALYSIS] AT SER-114; SER-157 AND SER-159</scope>
    <scope>IDENTIFICATION BY MASS SPECTROMETRY [LARGE SCALE ANALYSIS]</scope>
    <source>
        <tissue>Liver</tissue>
    </source>
</reference>
<keyword id="KW-0131">Cell cycle</keyword>
<keyword id="KW-0160">Chromosomal rearrangement</keyword>
<keyword id="KW-0539">Nucleus</keyword>
<keyword id="KW-0597">Phosphoprotein</keyword>
<keyword id="KW-1267">Proteomics identification</keyword>
<keyword id="KW-0656">Proto-oncogene</keyword>
<keyword id="KW-1185">Reference proteome</keyword>
<dbReference type="EMBL" id="X97124">
    <property type="protein sequence ID" value="CAA65791.1"/>
    <property type="molecule type" value="mRNA"/>
</dbReference>
<dbReference type="EMBL" id="X99720">
    <property type="protein sequence ID" value="CAA68060.1"/>
    <property type="molecule type" value="Genomic_DNA"/>
</dbReference>
<dbReference type="EMBL" id="AK289872">
    <property type="protein sequence ID" value="BAF82561.1"/>
    <property type="molecule type" value="mRNA"/>
</dbReference>
<dbReference type="EMBL" id="AL590666">
    <property type="status" value="NOT_ANNOTATED_CDS"/>
    <property type="molecule type" value="Genomic_DNA"/>
</dbReference>
<dbReference type="EMBL" id="CH471121">
    <property type="protein sequence ID" value="EAW52909.1"/>
    <property type="molecule type" value="Genomic_DNA"/>
</dbReference>
<dbReference type="EMBL" id="BC004913">
    <property type="protein sequence ID" value="AAH04913.1"/>
    <property type="molecule type" value="mRNA"/>
</dbReference>
<dbReference type="CCDS" id="CCDS1157.1"/>
<dbReference type="RefSeq" id="NP_005964.3">
    <property type="nucleotide sequence ID" value="NM_005973.4"/>
</dbReference>
<dbReference type="SMR" id="Q92733"/>
<dbReference type="BioGRID" id="111537">
    <property type="interactions" value="110"/>
</dbReference>
<dbReference type="CORUM" id="Q92733"/>
<dbReference type="FunCoup" id="Q92733">
    <property type="interactions" value="3737"/>
</dbReference>
<dbReference type="IntAct" id="Q92733">
    <property type="interactions" value="63"/>
</dbReference>
<dbReference type="MINT" id="Q92733"/>
<dbReference type="STRING" id="9606.ENSP00000271526"/>
<dbReference type="GlyGen" id="Q92733">
    <property type="glycosylation" value="5 sites, 1 O-linked glycan (4 sites)"/>
</dbReference>
<dbReference type="iPTMnet" id="Q92733"/>
<dbReference type="PhosphoSitePlus" id="Q92733"/>
<dbReference type="BioMuta" id="PRCC"/>
<dbReference type="DMDM" id="2498802"/>
<dbReference type="jPOST" id="Q92733"/>
<dbReference type="MassIVE" id="Q92733"/>
<dbReference type="PaxDb" id="9606-ENSP00000271526"/>
<dbReference type="PeptideAtlas" id="Q92733"/>
<dbReference type="ProteomicsDB" id="75429"/>
<dbReference type="Pumba" id="Q92733"/>
<dbReference type="Antibodypedia" id="4485">
    <property type="antibodies" value="83 antibodies from 20 providers"/>
</dbReference>
<dbReference type="DNASU" id="5546"/>
<dbReference type="Ensembl" id="ENST00000271526.9">
    <property type="protein sequence ID" value="ENSP00000271526.4"/>
    <property type="gene ID" value="ENSG00000143294.15"/>
</dbReference>
<dbReference type="GeneID" id="5546"/>
<dbReference type="KEGG" id="hsa:5546"/>
<dbReference type="MANE-Select" id="ENST00000271526.9">
    <property type="protein sequence ID" value="ENSP00000271526.4"/>
    <property type="RefSeq nucleotide sequence ID" value="NM_005973.5"/>
    <property type="RefSeq protein sequence ID" value="NP_005964.3"/>
</dbReference>
<dbReference type="UCSC" id="uc001fqa.4">
    <property type="organism name" value="human"/>
</dbReference>
<dbReference type="AGR" id="HGNC:9343"/>
<dbReference type="CTD" id="5546"/>
<dbReference type="DisGeNET" id="5546"/>
<dbReference type="GeneCards" id="PRCC"/>
<dbReference type="HGNC" id="HGNC:9343">
    <property type="gene designation" value="PRCC"/>
</dbReference>
<dbReference type="HPA" id="ENSG00000143294">
    <property type="expression patterns" value="Low tissue specificity"/>
</dbReference>
<dbReference type="MalaCards" id="PRCC"/>
<dbReference type="MIM" id="179755">
    <property type="type" value="gene"/>
</dbReference>
<dbReference type="neXtProt" id="NX_Q92733"/>
<dbReference type="OpenTargets" id="ENSG00000143294"/>
<dbReference type="Orphanet" id="319308">
    <property type="disease" value="MiT family translocation renal cell carcinoma"/>
</dbReference>
<dbReference type="PharmGKB" id="PA33704"/>
<dbReference type="VEuPathDB" id="HostDB:ENSG00000143294"/>
<dbReference type="eggNOG" id="KOG3903">
    <property type="taxonomic scope" value="Eukaryota"/>
</dbReference>
<dbReference type="GeneTree" id="ENSGT00390000009042"/>
<dbReference type="HOGENOM" id="CLU_032704_0_0_1"/>
<dbReference type="InParanoid" id="Q92733"/>
<dbReference type="OMA" id="TRQSYSK"/>
<dbReference type="OrthoDB" id="206969at2759"/>
<dbReference type="PAN-GO" id="Q92733">
    <property type="GO annotations" value="1 GO annotation based on evolutionary models"/>
</dbReference>
<dbReference type="PhylomeDB" id="Q92733"/>
<dbReference type="TreeFam" id="TF318780"/>
<dbReference type="PathwayCommons" id="Q92733"/>
<dbReference type="Reactome" id="R-HSA-72163">
    <property type="pathway name" value="mRNA Splicing - Major Pathway"/>
</dbReference>
<dbReference type="SignaLink" id="Q92733"/>
<dbReference type="SIGNOR" id="Q92733"/>
<dbReference type="BioGRID-ORCS" id="5546">
    <property type="hits" value="154 hits in 1158 CRISPR screens"/>
</dbReference>
<dbReference type="ChiTaRS" id="PRCC">
    <property type="organism name" value="human"/>
</dbReference>
<dbReference type="GeneWiki" id="PRCC_(gene)"/>
<dbReference type="GenomeRNAi" id="5546"/>
<dbReference type="Pharos" id="Q92733">
    <property type="development level" value="Tbio"/>
</dbReference>
<dbReference type="PRO" id="PR:Q92733"/>
<dbReference type="Proteomes" id="UP000005640">
    <property type="component" value="Chromosome 1"/>
</dbReference>
<dbReference type="RNAct" id="Q92733">
    <property type="molecule type" value="protein"/>
</dbReference>
<dbReference type="Bgee" id="ENSG00000143294">
    <property type="expression patterns" value="Expressed in cortical plate and 196 other cell types or tissues"/>
</dbReference>
<dbReference type="ExpressionAtlas" id="Q92733">
    <property type="expression patterns" value="baseline and differential"/>
</dbReference>
<dbReference type="GO" id="GO:0016607">
    <property type="term" value="C:nuclear speck"/>
    <property type="evidence" value="ECO:0000314"/>
    <property type="project" value="HPA"/>
</dbReference>
<dbReference type="GO" id="GO:0005654">
    <property type="term" value="C:nucleoplasm"/>
    <property type="evidence" value="ECO:0000304"/>
    <property type="project" value="Reactome"/>
</dbReference>
<dbReference type="GO" id="GO:0005634">
    <property type="term" value="C:nucleus"/>
    <property type="evidence" value="ECO:0000314"/>
    <property type="project" value="UniProtKB"/>
</dbReference>
<dbReference type="GO" id="GO:0051726">
    <property type="term" value="P:regulation of cell cycle"/>
    <property type="evidence" value="ECO:0000314"/>
    <property type="project" value="UniProtKB"/>
</dbReference>
<dbReference type="InterPro" id="IPR018800">
    <property type="entry name" value="PRCC"/>
</dbReference>
<dbReference type="PANTHER" id="PTHR13621">
    <property type="entry name" value="PROLINE-RICH PROTEIN PRCC"/>
    <property type="match status" value="1"/>
</dbReference>
<dbReference type="PANTHER" id="PTHR13621:SF2">
    <property type="entry name" value="PROLINE-RICH PROTEIN PRCC"/>
    <property type="match status" value="1"/>
</dbReference>
<dbReference type="Pfam" id="PF10253">
    <property type="entry name" value="PRCC"/>
    <property type="match status" value="1"/>
</dbReference>
<feature type="chain" id="PRO_0000058568" description="Proline-rich protein PRCC">
    <location>
        <begin position="1"/>
        <end position="491"/>
    </location>
</feature>
<feature type="region of interest" description="Disordered" evidence="1">
    <location>
        <begin position="1"/>
        <end position="244"/>
    </location>
</feature>
<feature type="region of interest" description="Mediates interaction with MAD2L2" evidence="2">
    <location>
        <begin position="1"/>
        <end position="100"/>
    </location>
</feature>
<feature type="region of interest" description="Disordered" evidence="1">
    <location>
        <begin position="260"/>
        <end position="313"/>
    </location>
</feature>
<feature type="region of interest" description="Disordered" evidence="1">
    <location>
        <begin position="432"/>
        <end position="454"/>
    </location>
</feature>
<feature type="compositionally biased region" description="Acidic residues" evidence="1">
    <location>
        <begin position="10"/>
        <end position="26"/>
    </location>
</feature>
<feature type="compositionally biased region" description="Low complexity" evidence="1">
    <location>
        <begin position="40"/>
        <end position="49"/>
    </location>
</feature>
<feature type="compositionally biased region" description="Pro residues" evidence="1">
    <location>
        <begin position="50"/>
        <end position="96"/>
    </location>
</feature>
<feature type="compositionally biased region" description="Low complexity" evidence="1">
    <location>
        <begin position="111"/>
        <end position="120"/>
    </location>
</feature>
<feature type="compositionally biased region" description="Low complexity" evidence="1">
    <location>
        <begin position="230"/>
        <end position="244"/>
    </location>
</feature>
<feature type="compositionally biased region" description="Acidic residues" evidence="1">
    <location>
        <begin position="262"/>
        <end position="272"/>
    </location>
</feature>
<feature type="compositionally biased region" description="Pro residues" evidence="1">
    <location>
        <begin position="287"/>
        <end position="307"/>
    </location>
</feature>
<feature type="modified residue" description="Phosphoserine" evidence="8">
    <location>
        <position position="97"/>
    </location>
</feature>
<feature type="modified residue" description="Phosphoserine" evidence="8 11">
    <location>
        <position position="114"/>
    </location>
</feature>
<feature type="modified residue" description="Phosphoserine" evidence="7 8 9 10 11">
    <location>
        <position position="157"/>
    </location>
</feature>
<feature type="modified residue" description="Phosphoserine" evidence="7 8 9 10 11">
    <location>
        <position position="159"/>
    </location>
</feature>
<feature type="modified residue" description="Phosphoserine" evidence="8">
    <location>
        <position position="212"/>
    </location>
</feature>
<feature type="modified residue" description="Phosphoserine" evidence="6">
    <location>
        <position position="218"/>
    </location>
</feature>
<feature type="modified residue" description="Phosphothreonine" evidence="8">
    <location>
        <position position="239"/>
    </location>
</feature>
<feature type="modified residue" description="Phosphoserine" evidence="8 10">
    <location>
        <position position="241"/>
    </location>
</feature>
<feature type="modified residue" description="Phosphoserine" evidence="7">
    <location>
        <position position="267"/>
    </location>
</feature>
<feature type="sequence variant" id="VAR_024341" description="In dbSNP:rs11264542." evidence="3">
    <original>P</original>
    <variation>S</variation>
    <location>
        <position position="136"/>
    </location>
</feature>